<gene>
    <name evidence="1" type="primary">truB</name>
    <name type="ordered locus">TT_C1769</name>
</gene>
<comment type="function">
    <text evidence="1">Responsible for synthesis of pseudouridine from uracil-55 in the psi GC loop of transfer RNAs.</text>
</comment>
<comment type="catalytic activity">
    <reaction evidence="1">
        <text>uridine(55) in tRNA = pseudouridine(55) in tRNA</text>
        <dbReference type="Rhea" id="RHEA:42532"/>
        <dbReference type="Rhea" id="RHEA-COMP:10101"/>
        <dbReference type="Rhea" id="RHEA-COMP:10102"/>
        <dbReference type="ChEBI" id="CHEBI:65314"/>
        <dbReference type="ChEBI" id="CHEBI:65315"/>
        <dbReference type="EC" id="5.4.99.25"/>
    </reaction>
</comment>
<comment type="similarity">
    <text evidence="1">Belongs to the pseudouridine synthase TruB family. Type 1 subfamily.</text>
</comment>
<reference key="1">
    <citation type="journal article" date="2004" name="Nat. Biotechnol.">
        <title>The genome sequence of the extreme thermophile Thermus thermophilus.</title>
        <authorList>
            <person name="Henne A."/>
            <person name="Brueggemann H."/>
            <person name="Raasch C."/>
            <person name="Wiezer A."/>
            <person name="Hartsch T."/>
            <person name="Liesegang H."/>
            <person name="Johann A."/>
            <person name="Lienard T."/>
            <person name="Gohl O."/>
            <person name="Martinez-Arias R."/>
            <person name="Jacobi C."/>
            <person name="Starkuviene V."/>
            <person name="Schlenczeck S."/>
            <person name="Dencker S."/>
            <person name="Huber R."/>
            <person name="Klenk H.-P."/>
            <person name="Kramer W."/>
            <person name="Merkl R."/>
            <person name="Gottschalk G."/>
            <person name="Fritz H.-J."/>
        </authorList>
    </citation>
    <scope>NUCLEOTIDE SEQUENCE [LARGE SCALE GENOMIC DNA]</scope>
    <source>
        <strain>ATCC BAA-163 / DSM 7039 / HB27</strain>
    </source>
</reference>
<evidence type="ECO:0000255" key="1">
    <source>
        <dbReference type="HAMAP-Rule" id="MF_01080"/>
    </source>
</evidence>
<sequence length="312" mass="34292">MALYAVDKPLHLTSHDVVEEARRRLSTRRVGHTGTLDPLATGLLLLVTNESTKLVPFLSGEDKEYIAWVSFGATTPTLDAEGPISEEAPARFDRKDLEAALPRFLEVREQVPPLYSAIKVGGKRAYEAAREGKPLALGPRPVRYLEVELLAFDPEPIPHPIAPSARGWRLAERRGRPVRLPRPLGAYPTAVVRLVVGPGTYVRAFARDLGEMLGTKAFLSGLVRTRVGRVGLERAVALSDLSPEKAIPELDVLPFPVVELSHTEARRVLEGMPLPIPAMGYVTLVDSKRRLLAIAEGDGFKLKIRRVFAKEA</sequence>
<organism>
    <name type="scientific">Thermus thermophilus (strain ATCC BAA-163 / DSM 7039 / HB27)</name>
    <dbReference type="NCBI Taxonomy" id="262724"/>
    <lineage>
        <taxon>Bacteria</taxon>
        <taxon>Thermotogati</taxon>
        <taxon>Deinococcota</taxon>
        <taxon>Deinococci</taxon>
        <taxon>Thermales</taxon>
        <taxon>Thermaceae</taxon>
        <taxon>Thermus</taxon>
    </lineage>
</organism>
<keyword id="KW-0413">Isomerase</keyword>
<keyword id="KW-0819">tRNA processing</keyword>
<accession>Q72GS9</accession>
<name>TRUB_THET2</name>
<feature type="chain" id="PRO_0000121930" description="tRNA pseudouridine synthase B">
    <location>
        <begin position="1"/>
        <end position="312"/>
    </location>
</feature>
<feature type="active site" description="Nucleophile" evidence="1">
    <location>
        <position position="37"/>
    </location>
</feature>
<dbReference type="EC" id="5.4.99.25" evidence="1"/>
<dbReference type="EMBL" id="AE017221">
    <property type="protein sequence ID" value="AAS82111.1"/>
    <property type="molecule type" value="Genomic_DNA"/>
</dbReference>
<dbReference type="RefSeq" id="WP_011174127.1">
    <property type="nucleotide sequence ID" value="NC_005835.1"/>
</dbReference>
<dbReference type="SMR" id="Q72GS9"/>
<dbReference type="GeneID" id="3170140"/>
<dbReference type="KEGG" id="tth:TT_C1769"/>
<dbReference type="eggNOG" id="COG0130">
    <property type="taxonomic scope" value="Bacteria"/>
</dbReference>
<dbReference type="HOGENOM" id="CLU_032087_0_2_0"/>
<dbReference type="OrthoDB" id="9802309at2"/>
<dbReference type="Proteomes" id="UP000000592">
    <property type="component" value="Chromosome"/>
</dbReference>
<dbReference type="GO" id="GO:0003723">
    <property type="term" value="F:RNA binding"/>
    <property type="evidence" value="ECO:0007669"/>
    <property type="project" value="InterPro"/>
</dbReference>
<dbReference type="GO" id="GO:0160148">
    <property type="term" value="F:tRNA pseudouridine(55) synthase activity"/>
    <property type="evidence" value="ECO:0007669"/>
    <property type="project" value="UniProtKB-EC"/>
</dbReference>
<dbReference type="GO" id="GO:1990481">
    <property type="term" value="P:mRNA pseudouridine synthesis"/>
    <property type="evidence" value="ECO:0007669"/>
    <property type="project" value="TreeGrafter"/>
</dbReference>
<dbReference type="GO" id="GO:0031119">
    <property type="term" value="P:tRNA pseudouridine synthesis"/>
    <property type="evidence" value="ECO:0007669"/>
    <property type="project" value="UniProtKB-UniRule"/>
</dbReference>
<dbReference type="CDD" id="cd02573">
    <property type="entry name" value="PseudoU_synth_EcTruB"/>
    <property type="match status" value="1"/>
</dbReference>
<dbReference type="Gene3D" id="3.30.2350.10">
    <property type="entry name" value="Pseudouridine synthase"/>
    <property type="match status" value="1"/>
</dbReference>
<dbReference type="HAMAP" id="MF_01080">
    <property type="entry name" value="TruB_bact"/>
    <property type="match status" value="1"/>
</dbReference>
<dbReference type="InterPro" id="IPR020103">
    <property type="entry name" value="PsdUridine_synth_cat_dom_sf"/>
</dbReference>
<dbReference type="InterPro" id="IPR002501">
    <property type="entry name" value="PsdUridine_synth_N"/>
</dbReference>
<dbReference type="InterPro" id="IPR014780">
    <property type="entry name" value="tRNA_psdUridine_synth_TruB"/>
</dbReference>
<dbReference type="NCBIfam" id="TIGR00431">
    <property type="entry name" value="TruB"/>
    <property type="match status" value="1"/>
</dbReference>
<dbReference type="PANTHER" id="PTHR13767:SF2">
    <property type="entry name" value="PSEUDOURIDYLATE SYNTHASE TRUB1"/>
    <property type="match status" value="1"/>
</dbReference>
<dbReference type="PANTHER" id="PTHR13767">
    <property type="entry name" value="TRNA-PSEUDOURIDINE SYNTHASE"/>
    <property type="match status" value="1"/>
</dbReference>
<dbReference type="Pfam" id="PF01509">
    <property type="entry name" value="TruB_N"/>
    <property type="match status" value="1"/>
</dbReference>
<dbReference type="SUPFAM" id="SSF55120">
    <property type="entry name" value="Pseudouridine synthase"/>
    <property type="match status" value="1"/>
</dbReference>
<proteinExistence type="inferred from homology"/>
<protein>
    <recommendedName>
        <fullName evidence="1">tRNA pseudouridine synthase B</fullName>
        <ecNumber evidence="1">5.4.99.25</ecNumber>
    </recommendedName>
    <alternativeName>
        <fullName evidence="1">tRNA pseudouridine(55) synthase</fullName>
        <shortName evidence="1">Psi55 synthase</shortName>
    </alternativeName>
    <alternativeName>
        <fullName evidence="1">tRNA pseudouridylate synthase</fullName>
    </alternativeName>
    <alternativeName>
        <fullName evidence="1">tRNA-uridine isomerase</fullName>
    </alternativeName>
</protein>